<comment type="function">
    <text evidence="4 5 6">Methylates caffeoyl-CoA to feruloyl-CoA. Has a very low activity with caffeic acid and esculetin. Involved in scopoletin biosynthesis in roots.</text>
</comment>
<comment type="catalytic activity">
    <reaction evidence="5">
        <text>(E)-caffeoyl-CoA + S-adenosyl-L-methionine = (E)-feruloyl-CoA + S-adenosyl-L-homocysteine + H(+)</text>
        <dbReference type="Rhea" id="RHEA:16925"/>
        <dbReference type="ChEBI" id="CHEBI:15378"/>
        <dbReference type="ChEBI" id="CHEBI:57856"/>
        <dbReference type="ChEBI" id="CHEBI:59789"/>
        <dbReference type="ChEBI" id="CHEBI:87136"/>
        <dbReference type="ChEBI" id="CHEBI:87305"/>
        <dbReference type="EC" id="2.1.1.104"/>
    </reaction>
</comment>
<comment type="cofactor">
    <cofactor evidence="1">
        <name>a divalent metal cation</name>
        <dbReference type="ChEBI" id="CHEBI:60240"/>
    </cofactor>
    <text evidence="1">Binds 1 divalent metal cation per subunit.</text>
</comment>
<comment type="pathway">
    <text>Aromatic compound metabolism; phenylpropanoid biosynthesis.</text>
</comment>
<comment type="alternative products">
    <event type="alternative splicing"/>
    <isoform>
        <id>O49499-1</id>
        <name>1</name>
        <sequence type="displayed"/>
    </isoform>
    <text>A number of isoforms are produced. According to EST sequences.</text>
</comment>
<comment type="tissue specificity">
    <text evidence="4 6">Expressed in stems and roots. Detected in leaves, siliques, flower buds, flowers. Expressed in the tapetum, but not in the endothecium. Detected in the vascular system of leaves and all flower organs, including stigma, stamens, petals and sepals.</text>
</comment>
<comment type="developmental stage">
    <text evidence="6">Expressed in young flower buds and decreases just before the petals appearance.</text>
</comment>
<comment type="disruption phenotype">
    <text evidence="4 5 6">No visible phenotype, but slightly smaller when grown in short days conditions. 70% and 85% reduction in scopoletin and scopolin levels respectively in the roots. Reduction in global lignin content and in hydroxycinnamic acid amides content in pollen.</text>
</comment>
<comment type="similarity">
    <text evidence="2">Belongs to the class I-like SAM-binding methyltransferase superfamily. Cation-dependent O-methyltransferase family. CCoAMT subfamily.</text>
</comment>
<evidence type="ECO:0000250" key="1">
    <source>
        <dbReference type="UniProtKB" id="Q40313"/>
    </source>
</evidence>
<evidence type="ECO:0000255" key="2">
    <source>
        <dbReference type="PROSITE-ProRule" id="PRU01019"/>
    </source>
</evidence>
<evidence type="ECO:0000256" key="3">
    <source>
        <dbReference type="SAM" id="MobiDB-lite"/>
    </source>
</evidence>
<evidence type="ECO:0000269" key="4">
    <source>
    </source>
</evidence>
<evidence type="ECO:0000269" key="5">
    <source>
    </source>
</evidence>
<evidence type="ECO:0000269" key="6">
    <source>
    </source>
</evidence>
<evidence type="ECO:0007744" key="7">
    <source>
    </source>
</evidence>
<proteinExistence type="evidence at protein level"/>
<gene>
    <name type="primary">CCOAOMT1</name>
    <name type="ordered locus">At4g34050</name>
    <name type="ORF">F28A23.190</name>
</gene>
<keyword id="KW-0007">Acetylation</keyword>
<keyword id="KW-0025">Alternative splicing</keyword>
<keyword id="KW-0438">Lignin biosynthesis</keyword>
<keyword id="KW-0479">Metal-binding</keyword>
<keyword id="KW-0489">Methyltransferase</keyword>
<keyword id="KW-1185">Reference proteome</keyword>
<keyword id="KW-0949">S-adenosyl-L-methionine</keyword>
<keyword id="KW-0808">Transferase</keyword>
<protein>
    <recommendedName>
        <fullName>Caffeoyl-CoA O-methyltransferase 1</fullName>
        <ecNumber>2.1.1.104</ecNumber>
    </recommendedName>
    <alternativeName>
        <fullName>Trans-caffeoyl-CoA 3-O-methyltransferase</fullName>
        <shortName>CCoAMT</shortName>
        <shortName>CCoAOMT1</shortName>
    </alternativeName>
</protein>
<organism>
    <name type="scientific">Arabidopsis thaliana</name>
    <name type="common">Mouse-ear cress</name>
    <dbReference type="NCBI Taxonomy" id="3702"/>
    <lineage>
        <taxon>Eukaryota</taxon>
        <taxon>Viridiplantae</taxon>
        <taxon>Streptophyta</taxon>
        <taxon>Embryophyta</taxon>
        <taxon>Tracheophyta</taxon>
        <taxon>Spermatophyta</taxon>
        <taxon>Magnoliopsida</taxon>
        <taxon>eudicotyledons</taxon>
        <taxon>Gunneridae</taxon>
        <taxon>Pentapetalae</taxon>
        <taxon>rosids</taxon>
        <taxon>malvids</taxon>
        <taxon>Brassicales</taxon>
        <taxon>Brassicaceae</taxon>
        <taxon>Camelineae</taxon>
        <taxon>Arabidopsis</taxon>
    </lineage>
</organism>
<feature type="initiator methionine" description="Removed" evidence="7">
    <location>
        <position position="1"/>
    </location>
</feature>
<feature type="chain" id="PRO_0000165679" description="Caffeoyl-CoA O-methyltransferase 1">
    <location>
        <begin position="2"/>
        <end position="259"/>
    </location>
</feature>
<feature type="region of interest" description="Disordered" evidence="3">
    <location>
        <begin position="1"/>
        <end position="29"/>
    </location>
</feature>
<feature type="compositionally biased region" description="Low complexity" evidence="3">
    <location>
        <begin position="1"/>
        <end position="14"/>
    </location>
</feature>
<feature type="binding site" evidence="1">
    <location>
        <position position="33"/>
    </location>
    <ligand>
        <name>substrate</name>
    </ligand>
</feature>
<feature type="binding site" evidence="2">
    <location>
        <position position="75"/>
    </location>
    <ligand>
        <name>S-adenosyl-L-methionine</name>
        <dbReference type="ChEBI" id="CHEBI:59789"/>
    </ligand>
</feature>
<feature type="binding site" evidence="2">
    <location>
        <position position="97"/>
    </location>
    <ligand>
        <name>S-adenosyl-L-methionine</name>
        <dbReference type="ChEBI" id="CHEBI:59789"/>
    </ligand>
</feature>
<feature type="binding site" evidence="2">
    <location>
        <begin position="99"/>
        <end position="100"/>
    </location>
    <ligand>
        <name>S-adenosyl-L-methionine</name>
        <dbReference type="ChEBI" id="CHEBI:59789"/>
    </ligand>
</feature>
<feature type="binding site" evidence="2">
    <location>
        <position position="105"/>
    </location>
    <ligand>
        <name>S-adenosyl-L-methionine</name>
        <dbReference type="ChEBI" id="CHEBI:59789"/>
    </ligand>
</feature>
<feature type="binding site" evidence="2">
    <location>
        <position position="123"/>
    </location>
    <ligand>
        <name>S-adenosyl-L-methionine</name>
        <dbReference type="ChEBI" id="CHEBI:59789"/>
    </ligand>
</feature>
<feature type="binding site" evidence="2">
    <location>
        <position position="152"/>
    </location>
    <ligand>
        <name>S-adenosyl-L-methionine</name>
        <dbReference type="ChEBI" id="CHEBI:59789"/>
    </ligand>
</feature>
<feature type="binding site" evidence="2">
    <location>
        <position position="175"/>
    </location>
    <ligand>
        <name>a divalent metal cation</name>
        <dbReference type="ChEBI" id="CHEBI:60240"/>
    </ligand>
</feature>
<feature type="binding site" evidence="1">
    <location>
        <position position="175"/>
    </location>
    <ligand>
        <name>substrate</name>
    </ligand>
</feature>
<feature type="binding site" evidence="2">
    <location>
        <position position="177"/>
    </location>
    <ligand>
        <name>S-adenosyl-L-methionine</name>
        <dbReference type="ChEBI" id="CHEBI:59789"/>
    </ligand>
</feature>
<feature type="binding site" evidence="2">
    <location>
        <position position="201"/>
    </location>
    <ligand>
        <name>a divalent metal cation</name>
        <dbReference type="ChEBI" id="CHEBI:60240"/>
    </ligand>
</feature>
<feature type="binding site" evidence="2">
    <location>
        <position position="202"/>
    </location>
    <ligand>
        <name>a divalent metal cation</name>
        <dbReference type="ChEBI" id="CHEBI:60240"/>
    </ligand>
</feature>
<feature type="binding site" evidence="1">
    <location>
        <position position="206"/>
    </location>
    <ligand>
        <name>substrate</name>
    </ligand>
</feature>
<feature type="modified residue" description="N-acetylalanine" evidence="7">
    <location>
        <position position="2"/>
    </location>
</feature>
<reference key="1">
    <citation type="journal article" date="1999" name="Nature">
        <title>Sequence and analysis of chromosome 4 of the plant Arabidopsis thaliana.</title>
        <authorList>
            <person name="Mayer K.F.X."/>
            <person name="Schueller C."/>
            <person name="Wambutt R."/>
            <person name="Murphy G."/>
            <person name="Volckaert G."/>
            <person name="Pohl T."/>
            <person name="Duesterhoeft A."/>
            <person name="Stiekema W."/>
            <person name="Entian K.-D."/>
            <person name="Terryn N."/>
            <person name="Harris B."/>
            <person name="Ansorge W."/>
            <person name="Brandt P."/>
            <person name="Grivell L.A."/>
            <person name="Rieger M."/>
            <person name="Weichselgartner M."/>
            <person name="de Simone V."/>
            <person name="Obermaier B."/>
            <person name="Mache R."/>
            <person name="Mueller M."/>
            <person name="Kreis M."/>
            <person name="Delseny M."/>
            <person name="Puigdomenech P."/>
            <person name="Watson M."/>
            <person name="Schmidtheini T."/>
            <person name="Reichert B."/>
            <person name="Portetelle D."/>
            <person name="Perez-Alonso M."/>
            <person name="Boutry M."/>
            <person name="Bancroft I."/>
            <person name="Vos P."/>
            <person name="Hoheisel J."/>
            <person name="Zimmermann W."/>
            <person name="Wedler H."/>
            <person name="Ridley P."/>
            <person name="Langham S.-A."/>
            <person name="McCullagh B."/>
            <person name="Bilham L."/>
            <person name="Robben J."/>
            <person name="van der Schueren J."/>
            <person name="Grymonprez B."/>
            <person name="Chuang Y.-J."/>
            <person name="Vandenbussche F."/>
            <person name="Braeken M."/>
            <person name="Weltjens I."/>
            <person name="Voet M."/>
            <person name="Bastiaens I."/>
            <person name="Aert R."/>
            <person name="Defoor E."/>
            <person name="Weitzenegger T."/>
            <person name="Bothe G."/>
            <person name="Ramsperger U."/>
            <person name="Hilbert H."/>
            <person name="Braun M."/>
            <person name="Holzer E."/>
            <person name="Brandt A."/>
            <person name="Peters S."/>
            <person name="van Staveren M."/>
            <person name="Dirkse W."/>
            <person name="Mooijman P."/>
            <person name="Klein Lankhorst R."/>
            <person name="Rose M."/>
            <person name="Hauf J."/>
            <person name="Koetter P."/>
            <person name="Berneiser S."/>
            <person name="Hempel S."/>
            <person name="Feldpausch M."/>
            <person name="Lamberth S."/>
            <person name="Van den Daele H."/>
            <person name="De Keyser A."/>
            <person name="Buysshaert C."/>
            <person name="Gielen J."/>
            <person name="Villarroel R."/>
            <person name="De Clercq R."/>
            <person name="van Montagu M."/>
            <person name="Rogers J."/>
            <person name="Cronin A."/>
            <person name="Quail M.A."/>
            <person name="Bray-Allen S."/>
            <person name="Clark L."/>
            <person name="Doggett J."/>
            <person name="Hall S."/>
            <person name="Kay M."/>
            <person name="Lennard N."/>
            <person name="McLay K."/>
            <person name="Mayes R."/>
            <person name="Pettett A."/>
            <person name="Rajandream M.A."/>
            <person name="Lyne M."/>
            <person name="Benes V."/>
            <person name="Rechmann S."/>
            <person name="Borkova D."/>
            <person name="Bloecker H."/>
            <person name="Scharfe M."/>
            <person name="Grimm M."/>
            <person name="Loehnert T.-H."/>
            <person name="Dose S."/>
            <person name="de Haan M."/>
            <person name="Maarse A.C."/>
            <person name="Schaefer M."/>
            <person name="Mueller-Auer S."/>
            <person name="Gabel C."/>
            <person name="Fuchs M."/>
            <person name="Fartmann B."/>
            <person name="Granderath K."/>
            <person name="Dauner D."/>
            <person name="Herzl A."/>
            <person name="Neumann S."/>
            <person name="Argiriou A."/>
            <person name="Vitale D."/>
            <person name="Liguori R."/>
            <person name="Piravandi E."/>
            <person name="Massenet O."/>
            <person name="Quigley F."/>
            <person name="Clabauld G."/>
            <person name="Muendlein A."/>
            <person name="Felber R."/>
            <person name="Schnabl S."/>
            <person name="Hiller R."/>
            <person name="Schmidt W."/>
            <person name="Lecharny A."/>
            <person name="Aubourg S."/>
            <person name="Chefdor F."/>
            <person name="Cooke R."/>
            <person name="Berger C."/>
            <person name="Monfort A."/>
            <person name="Casacuberta E."/>
            <person name="Gibbons T."/>
            <person name="Weber N."/>
            <person name="Vandenbol M."/>
            <person name="Bargues M."/>
            <person name="Terol J."/>
            <person name="Torres A."/>
            <person name="Perez-Perez A."/>
            <person name="Purnelle B."/>
            <person name="Bent E."/>
            <person name="Johnson S."/>
            <person name="Tacon D."/>
            <person name="Jesse T."/>
            <person name="Heijnen L."/>
            <person name="Schwarz S."/>
            <person name="Scholler P."/>
            <person name="Heber S."/>
            <person name="Francs P."/>
            <person name="Bielke C."/>
            <person name="Frishman D."/>
            <person name="Haase D."/>
            <person name="Lemcke K."/>
            <person name="Mewes H.-W."/>
            <person name="Stocker S."/>
            <person name="Zaccaria P."/>
            <person name="Bevan M."/>
            <person name="Wilson R.K."/>
            <person name="de la Bastide M."/>
            <person name="Habermann K."/>
            <person name="Parnell L."/>
            <person name="Dedhia N."/>
            <person name="Gnoj L."/>
            <person name="Schutz K."/>
            <person name="Huang E."/>
            <person name="Spiegel L."/>
            <person name="Sekhon M."/>
            <person name="Murray J."/>
            <person name="Sheet P."/>
            <person name="Cordes M."/>
            <person name="Abu-Threideh J."/>
            <person name="Stoneking T."/>
            <person name="Kalicki J."/>
            <person name="Graves T."/>
            <person name="Harmon G."/>
            <person name="Edwards J."/>
            <person name="Latreille P."/>
            <person name="Courtney L."/>
            <person name="Cloud J."/>
            <person name="Abbott A."/>
            <person name="Scott K."/>
            <person name="Johnson D."/>
            <person name="Minx P."/>
            <person name="Bentley D."/>
            <person name="Fulton B."/>
            <person name="Miller N."/>
            <person name="Greco T."/>
            <person name="Kemp K."/>
            <person name="Kramer J."/>
            <person name="Fulton L."/>
            <person name="Mardis E."/>
            <person name="Dante M."/>
            <person name="Pepin K."/>
            <person name="Hillier L.W."/>
            <person name="Nelson J."/>
            <person name="Spieth J."/>
            <person name="Ryan E."/>
            <person name="Andrews S."/>
            <person name="Geisel C."/>
            <person name="Layman D."/>
            <person name="Du H."/>
            <person name="Ali J."/>
            <person name="Berghoff A."/>
            <person name="Jones K."/>
            <person name="Drone K."/>
            <person name="Cotton M."/>
            <person name="Joshu C."/>
            <person name="Antonoiu B."/>
            <person name="Zidanic M."/>
            <person name="Strong C."/>
            <person name="Sun H."/>
            <person name="Lamar B."/>
            <person name="Yordan C."/>
            <person name="Ma P."/>
            <person name="Zhong J."/>
            <person name="Preston R."/>
            <person name="Vil D."/>
            <person name="Shekher M."/>
            <person name="Matero A."/>
            <person name="Shah R."/>
            <person name="Swaby I.K."/>
            <person name="O'Shaughnessy A."/>
            <person name="Rodriguez M."/>
            <person name="Hoffman J."/>
            <person name="Till S."/>
            <person name="Granat S."/>
            <person name="Shohdy N."/>
            <person name="Hasegawa A."/>
            <person name="Hameed A."/>
            <person name="Lodhi M."/>
            <person name="Johnson A."/>
            <person name="Chen E."/>
            <person name="Marra M.A."/>
            <person name="Martienssen R."/>
            <person name="McCombie W.R."/>
        </authorList>
    </citation>
    <scope>NUCLEOTIDE SEQUENCE [LARGE SCALE GENOMIC DNA]</scope>
    <source>
        <strain>cv. Columbia</strain>
    </source>
</reference>
<reference key="2">
    <citation type="journal article" date="2017" name="Plant J.">
        <title>Araport11: a complete reannotation of the Arabidopsis thaliana reference genome.</title>
        <authorList>
            <person name="Cheng C.Y."/>
            <person name="Krishnakumar V."/>
            <person name="Chan A.P."/>
            <person name="Thibaud-Nissen F."/>
            <person name="Schobel S."/>
            <person name="Town C.D."/>
        </authorList>
    </citation>
    <scope>GENOME REANNOTATION</scope>
    <source>
        <strain>cv. Columbia</strain>
    </source>
</reference>
<reference key="3">
    <citation type="journal article" date="2003" name="Science">
        <title>Empirical analysis of transcriptional activity in the Arabidopsis genome.</title>
        <authorList>
            <person name="Yamada K."/>
            <person name="Lim J."/>
            <person name="Dale J.M."/>
            <person name="Chen H."/>
            <person name="Shinn P."/>
            <person name="Palm C.J."/>
            <person name="Southwick A.M."/>
            <person name="Wu H.C."/>
            <person name="Kim C.J."/>
            <person name="Nguyen M."/>
            <person name="Pham P.K."/>
            <person name="Cheuk R.F."/>
            <person name="Karlin-Newmann G."/>
            <person name="Liu S.X."/>
            <person name="Lam B."/>
            <person name="Sakano H."/>
            <person name="Wu T."/>
            <person name="Yu G."/>
            <person name="Miranda M."/>
            <person name="Quach H.L."/>
            <person name="Tripp M."/>
            <person name="Chang C.H."/>
            <person name="Lee J.M."/>
            <person name="Toriumi M.J."/>
            <person name="Chan M.M."/>
            <person name="Tang C.C."/>
            <person name="Onodera C.S."/>
            <person name="Deng J.M."/>
            <person name="Akiyama K."/>
            <person name="Ansari Y."/>
            <person name="Arakawa T."/>
            <person name="Banh J."/>
            <person name="Banno F."/>
            <person name="Bowser L."/>
            <person name="Brooks S.Y."/>
            <person name="Carninci P."/>
            <person name="Chao Q."/>
            <person name="Choy N."/>
            <person name="Enju A."/>
            <person name="Goldsmith A.D."/>
            <person name="Gurjal M."/>
            <person name="Hansen N.F."/>
            <person name="Hayashizaki Y."/>
            <person name="Johnson-Hopson C."/>
            <person name="Hsuan V.W."/>
            <person name="Iida K."/>
            <person name="Karnes M."/>
            <person name="Khan S."/>
            <person name="Koesema E."/>
            <person name="Ishida J."/>
            <person name="Jiang P.X."/>
            <person name="Jones T."/>
            <person name="Kawai J."/>
            <person name="Kamiya A."/>
            <person name="Meyers C."/>
            <person name="Nakajima M."/>
            <person name="Narusaka M."/>
            <person name="Seki M."/>
            <person name="Sakurai T."/>
            <person name="Satou M."/>
            <person name="Tamse R."/>
            <person name="Vaysberg M."/>
            <person name="Wallender E.K."/>
            <person name="Wong C."/>
            <person name="Yamamura Y."/>
            <person name="Yuan S."/>
            <person name="Shinozaki K."/>
            <person name="Davis R.W."/>
            <person name="Theologis A."/>
            <person name="Ecker J.R."/>
        </authorList>
    </citation>
    <scope>NUCLEOTIDE SEQUENCE [LARGE SCALE MRNA]</scope>
    <source>
        <strain>cv. Columbia</strain>
    </source>
</reference>
<reference key="4">
    <citation type="submission" date="2002-03" db="EMBL/GenBank/DDBJ databases">
        <title>Full-length cDNA from Arabidopsis thaliana.</title>
        <authorList>
            <person name="Brover V.V."/>
            <person name="Troukhan M.E."/>
            <person name="Alexandrov N.A."/>
            <person name="Lu Y.-P."/>
            <person name="Flavell R.B."/>
            <person name="Feldmann K.A."/>
        </authorList>
    </citation>
    <scope>NUCLEOTIDE SEQUENCE [LARGE SCALE MRNA]</scope>
</reference>
<reference key="5">
    <citation type="journal article" date="2007" name="Planta">
        <title>Both caffeoyl Coenzyme A 3-O-methyltransferase 1 and caffeic acid O-methyltransferase 1 are involved in redundant functions for lignin, flavonoids and sinapoyl malate biosynthesis in Arabidopsis.</title>
        <authorList>
            <person name="Do C.T."/>
            <person name="Pollet B."/>
            <person name="Thevenin J."/>
            <person name="Sibout R."/>
            <person name="Denoue D."/>
            <person name="Barriere Y."/>
            <person name="Lapierre C."/>
            <person name="Jouanin L."/>
        </authorList>
    </citation>
    <scope>FUNCTION</scope>
    <scope>TISSUE SPECIFICITY</scope>
    <scope>DISRUPTION PHENOTYPE</scope>
</reference>
<reference key="6">
    <citation type="journal article" date="2008" name="Plant J.">
        <title>Scopoletin is biosynthesized via ortho-hydroxylation of feruloyl CoA by a 2-oxoglutarate-dependent dioxygenase in Arabidopsis thaliana.</title>
        <authorList>
            <person name="Kai K."/>
            <person name="Mizutani M."/>
            <person name="Kawamura N."/>
            <person name="Yamamoto R."/>
            <person name="Tamai M."/>
            <person name="Yamaguchi H."/>
            <person name="Sakata K."/>
            <person name="Shimizu B."/>
        </authorList>
    </citation>
    <scope>FUNCTION</scope>
    <scope>CATALYTIC ACTIVITY</scope>
    <scope>DISRUPTION PHENOTYPE</scope>
</reference>
<reference key="7">
    <citation type="journal article" date="2012" name="Mol. Cell. Proteomics">
        <title>Comparative large-scale characterisation of plant vs. mammal proteins reveals similar and idiosyncratic N-alpha acetylation features.</title>
        <authorList>
            <person name="Bienvenut W.V."/>
            <person name="Sumpton D."/>
            <person name="Martinez A."/>
            <person name="Lilla S."/>
            <person name="Espagne C."/>
            <person name="Meinnel T."/>
            <person name="Giglione C."/>
        </authorList>
    </citation>
    <scope>ACETYLATION [LARGE SCALE ANALYSIS] AT ALA-2</scope>
    <scope>CLEAVAGE OF INITIATOR METHIONINE [LARGE SCALE ANALYSIS]</scope>
    <scope>IDENTIFICATION BY MASS SPECTROMETRY [LARGE SCALE ANALYSIS]</scope>
</reference>
<reference key="8">
    <citation type="journal article" date="2012" name="Planta">
        <title>The role of CCoAOMT1 and COMT1 in Arabidopsis anthers.</title>
        <authorList>
            <person name="Fellenberg C."/>
            <person name="van Ohlen M."/>
            <person name="Handrick V."/>
            <person name="Vogt T."/>
        </authorList>
    </citation>
    <scope>FUNCTION</scope>
    <scope>TISSUE SPECIFICITY</scope>
    <scope>DEVELOPMENTAL STAGE</scope>
    <scope>DISRUPTION PHENOTYPE</scope>
</reference>
<accession>O49499</accession>
<accession>Q8L989</accession>
<dbReference type="EC" id="2.1.1.104"/>
<dbReference type="EMBL" id="AL021961">
    <property type="protein sequence ID" value="CAA17567.1"/>
    <property type="molecule type" value="Genomic_DNA"/>
</dbReference>
<dbReference type="EMBL" id="AL161584">
    <property type="protein sequence ID" value="CAB80122.1"/>
    <property type="molecule type" value="Genomic_DNA"/>
</dbReference>
<dbReference type="EMBL" id="CP002687">
    <property type="protein sequence ID" value="AEE86314.1"/>
    <property type="molecule type" value="Genomic_DNA"/>
</dbReference>
<dbReference type="EMBL" id="AY057554">
    <property type="protein sequence ID" value="AAL09793.1"/>
    <property type="molecule type" value="mRNA"/>
</dbReference>
<dbReference type="EMBL" id="AY062630">
    <property type="protein sequence ID" value="AAL32708.1"/>
    <property type="molecule type" value="mRNA"/>
</dbReference>
<dbReference type="EMBL" id="AY081457">
    <property type="protein sequence ID" value="AAM10019.1"/>
    <property type="molecule type" value="mRNA"/>
</dbReference>
<dbReference type="EMBL" id="AY143979">
    <property type="protein sequence ID" value="AAN28918.1"/>
    <property type="molecule type" value="mRNA"/>
</dbReference>
<dbReference type="EMBL" id="AY088577">
    <property type="protein sequence ID" value="AAM66108.1"/>
    <property type="molecule type" value="mRNA"/>
</dbReference>
<dbReference type="PIR" id="T05431">
    <property type="entry name" value="T05431"/>
</dbReference>
<dbReference type="RefSeq" id="NP_195131.1">
    <molecule id="O49499-1"/>
    <property type="nucleotide sequence ID" value="NM_119566.5"/>
</dbReference>
<dbReference type="SMR" id="O49499"/>
<dbReference type="BioGRID" id="14833">
    <property type="interactions" value="7"/>
</dbReference>
<dbReference type="FunCoup" id="O49499">
    <property type="interactions" value="1165"/>
</dbReference>
<dbReference type="IntAct" id="O49499">
    <property type="interactions" value="6"/>
</dbReference>
<dbReference type="STRING" id="3702.O49499"/>
<dbReference type="iPTMnet" id="O49499"/>
<dbReference type="PaxDb" id="3702-AT4G34050.1"/>
<dbReference type="EnsemblPlants" id="AT4G34050.1">
    <molecule id="O49499-1"/>
    <property type="protein sequence ID" value="AT4G34050.1"/>
    <property type="gene ID" value="AT4G34050"/>
</dbReference>
<dbReference type="GeneID" id="829551"/>
<dbReference type="Gramene" id="AT4G34050.1">
    <molecule id="O49499-1"/>
    <property type="protein sequence ID" value="AT4G34050.1"/>
    <property type="gene ID" value="AT4G34050"/>
</dbReference>
<dbReference type="KEGG" id="ath:AT4G34050"/>
<dbReference type="Araport" id="AT4G34050"/>
<dbReference type="TAIR" id="AT4G34050">
    <property type="gene designation" value="CCOAOMT1"/>
</dbReference>
<dbReference type="eggNOG" id="KOG1663">
    <property type="taxonomic scope" value="Eukaryota"/>
</dbReference>
<dbReference type="HOGENOM" id="CLU_067676_5_0_1"/>
<dbReference type="InParanoid" id="O49499"/>
<dbReference type="OMA" id="SGHIEGQ"/>
<dbReference type="OrthoDB" id="1042928at2759"/>
<dbReference type="PhylomeDB" id="O49499"/>
<dbReference type="BioCyc" id="ARA:AT4G34050-MONOMER"/>
<dbReference type="BioCyc" id="MetaCyc:AT4G34050-MONOMER"/>
<dbReference type="BRENDA" id="2.1.1.104">
    <property type="organism ID" value="399"/>
</dbReference>
<dbReference type="UniPathway" id="UPA00711"/>
<dbReference type="PRO" id="PR:O49499"/>
<dbReference type="Proteomes" id="UP000006548">
    <property type="component" value="Chromosome 4"/>
</dbReference>
<dbReference type="ExpressionAtlas" id="O49499">
    <property type="expression patterns" value="baseline and differential"/>
</dbReference>
<dbReference type="GO" id="GO:0005829">
    <property type="term" value="C:cytosol"/>
    <property type="evidence" value="ECO:0007005"/>
    <property type="project" value="TAIR"/>
</dbReference>
<dbReference type="GO" id="GO:0005886">
    <property type="term" value="C:plasma membrane"/>
    <property type="evidence" value="ECO:0007005"/>
    <property type="project" value="TAIR"/>
</dbReference>
<dbReference type="GO" id="GO:0042409">
    <property type="term" value="F:caffeoyl-CoA O-methyltransferase activity"/>
    <property type="evidence" value="ECO:0000314"/>
    <property type="project" value="TAIR"/>
</dbReference>
<dbReference type="GO" id="GO:0046872">
    <property type="term" value="F:metal ion binding"/>
    <property type="evidence" value="ECO:0007669"/>
    <property type="project" value="UniProtKB-KW"/>
</dbReference>
<dbReference type="GO" id="GO:0009805">
    <property type="term" value="P:coumarin biosynthetic process"/>
    <property type="evidence" value="ECO:0000315"/>
    <property type="project" value="TAIR"/>
</dbReference>
<dbReference type="GO" id="GO:0009809">
    <property type="term" value="P:lignin biosynthetic process"/>
    <property type="evidence" value="ECO:0000315"/>
    <property type="project" value="TAIR"/>
</dbReference>
<dbReference type="GO" id="GO:0032259">
    <property type="term" value="P:methylation"/>
    <property type="evidence" value="ECO:0007669"/>
    <property type="project" value="UniProtKB-KW"/>
</dbReference>
<dbReference type="FunFam" id="3.40.50.150:FF:000147">
    <property type="entry name" value="Caffeoyl-CoA O-methyltransferase 1"/>
    <property type="match status" value="1"/>
</dbReference>
<dbReference type="Gene3D" id="3.40.50.150">
    <property type="entry name" value="Vaccinia Virus protein VP39"/>
    <property type="match status" value="1"/>
</dbReference>
<dbReference type="InterPro" id="IPR050362">
    <property type="entry name" value="Cation-dep_OMT"/>
</dbReference>
<dbReference type="InterPro" id="IPR029063">
    <property type="entry name" value="SAM-dependent_MTases_sf"/>
</dbReference>
<dbReference type="InterPro" id="IPR002935">
    <property type="entry name" value="SAM_O-MeTrfase"/>
</dbReference>
<dbReference type="PANTHER" id="PTHR10509:SF84">
    <property type="entry name" value="CAFFEOYL-COA O-METHYLTRANSFERASE 1"/>
    <property type="match status" value="1"/>
</dbReference>
<dbReference type="PANTHER" id="PTHR10509">
    <property type="entry name" value="O-METHYLTRANSFERASE-RELATED"/>
    <property type="match status" value="1"/>
</dbReference>
<dbReference type="Pfam" id="PF01596">
    <property type="entry name" value="Methyltransf_3"/>
    <property type="match status" value="1"/>
</dbReference>
<dbReference type="SUPFAM" id="SSF53335">
    <property type="entry name" value="S-adenosyl-L-methionine-dependent methyltransferases"/>
    <property type="match status" value="1"/>
</dbReference>
<dbReference type="PROSITE" id="PS51682">
    <property type="entry name" value="SAM_OMT_I"/>
    <property type="match status" value="1"/>
</dbReference>
<sequence>MATTTTEATKTSSTNGEDQKQSQNLRHQEVGHKSLLQSDDLYQYILETSVYPREPESMKELREVTAKHPWNIMTTSADEGQFLNMLIKLVNAKNTMEIGVYTGYSLLATALALPEDGKILAMDVNRENYELGLPIIEKAGVAHKIDFREGPALPVLDEIVADEKNHGTYDFIFVDADKDNYINYHKRLIDLVKIGGVIGYDNTLWNGSVVAPPDAPMRKYVRYYRDFVLELNKALAADPRIEICMLPVGDGITICRRIS</sequence>
<name>CAMT4_ARATH</name>